<proteinExistence type="evidence at transcript level"/>
<evidence type="ECO:0000255" key="1"/>
<evidence type="ECO:0000305" key="2"/>
<gene>
    <name type="primary">tbg</name>
    <name type="synonym">tub4</name>
    <name type="ORF">G17A4.160</name>
    <name type="ORF">NCU03954</name>
</gene>
<accession>P53377</accession>
<accession>Q7RV77</accession>
<accession>V5ILK0</accession>
<feature type="chain" id="PRO_0000048474" description="Tubulin gamma chain">
    <location>
        <begin position="1"/>
        <end position="461"/>
    </location>
</feature>
<feature type="binding site" evidence="1">
    <location>
        <begin position="142"/>
        <end position="148"/>
    </location>
    <ligand>
        <name>GTP</name>
        <dbReference type="ChEBI" id="CHEBI:37565"/>
    </ligand>
</feature>
<organism>
    <name type="scientific">Neurospora crassa (strain ATCC 24698 / 74-OR23-1A / CBS 708.71 / DSM 1257 / FGSC 987)</name>
    <dbReference type="NCBI Taxonomy" id="367110"/>
    <lineage>
        <taxon>Eukaryota</taxon>
        <taxon>Fungi</taxon>
        <taxon>Dikarya</taxon>
        <taxon>Ascomycota</taxon>
        <taxon>Pezizomycotina</taxon>
        <taxon>Sordariomycetes</taxon>
        <taxon>Sordariomycetidae</taxon>
        <taxon>Sordariales</taxon>
        <taxon>Sordariaceae</taxon>
        <taxon>Neurospora</taxon>
    </lineage>
</organism>
<comment type="function">
    <text>Tubulin is the major constituent of microtubules. The gamma chain is found at microtubule organizing centers (MTOC) such as the spindle poles or the centrosome, suggesting that it is involved in the minus-end nucleation of microtubule assembly.</text>
</comment>
<comment type="subcellular location">
    <subcellularLocation>
        <location evidence="2">Cytoplasm</location>
        <location evidence="2">Cytoskeleton</location>
        <location evidence="2">Microtubule organizing center</location>
        <location evidence="2">Spindle pole body</location>
    </subcellularLocation>
</comment>
<comment type="similarity">
    <text evidence="2">Belongs to the tubulin family.</text>
</comment>
<keyword id="KW-0963">Cytoplasm</keyword>
<keyword id="KW-0206">Cytoskeleton</keyword>
<keyword id="KW-0342">GTP-binding</keyword>
<keyword id="KW-0493">Microtubule</keyword>
<keyword id="KW-0547">Nucleotide-binding</keyword>
<keyword id="KW-1185">Reference proteome</keyword>
<reference key="1">
    <citation type="journal article" date="1997" name="Gene">
        <title>Primary structure of Neurospora crassa gamma-tubulin.</title>
        <authorList>
            <person name="Heckmann S."/>
            <person name="Schliwa M."/>
            <person name="Kube-Granderath E."/>
        </authorList>
    </citation>
    <scope>NUCLEOTIDE SEQUENCE [MRNA]</scope>
</reference>
<reference key="2">
    <citation type="journal article" date="2003" name="Nucleic Acids Res.">
        <title>What's in the genome of a filamentous fungus? Analysis of the Neurospora genome sequence.</title>
        <authorList>
            <person name="Mannhaupt G."/>
            <person name="Montrone C."/>
            <person name="Haase D."/>
            <person name="Mewes H.-W."/>
            <person name="Aign V."/>
            <person name="Hoheisel J.D."/>
            <person name="Fartmann B."/>
            <person name="Nyakatura G."/>
            <person name="Kempken F."/>
            <person name="Maier J."/>
            <person name="Schulte U."/>
        </authorList>
    </citation>
    <scope>NUCLEOTIDE SEQUENCE [LARGE SCALE GENOMIC DNA]</scope>
    <source>
        <strain>ATCC 24698 / 74-OR23-1A / CBS 708.71 / DSM 1257 / FGSC 987</strain>
    </source>
</reference>
<reference key="3">
    <citation type="journal article" date="2003" name="Nature">
        <title>The genome sequence of the filamentous fungus Neurospora crassa.</title>
        <authorList>
            <person name="Galagan J.E."/>
            <person name="Calvo S.E."/>
            <person name="Borkovich K.A."/>
            <person name="Selker E.U."/>
            <person name="Read N.D."/>
            <person name="Jaffe D.B."/>
            <person name="FitzHugh W."/>
            <person name="Ma L.-J."/>
            <person name="Smirnov S."/>
            <person name="Purcell S."/>
            <person name="Rehman B."/>
            <person name="Elkins T."/>
            <person name="Engels R."/>
            <person name="Wang S."/>
            <person name="Nielsen C.B."/>
            <person name="Butler J."/>
            <person name="Endrizzi M."/>
            <person name="Qui D."/>
            <person name="Ianakiev P."/>
            <person name="Bell-Pedersen D."/>
            <person name="Nelson M.A."/>
            <person name="Werner-Washburne M."/>
            <person name="Selitrennikoff C.P."/>
            <person name="Kinsey J.A."/>
            <person name="Braun E.L."/>
            <person name="Zelter A."/>
            <person name="Schulte U."/>
            <person name="Kothe G.O."/>
            <person name="Jedd G."/>
            <person name="Mewes H.-W."/>
            <person name="Staben C."/>
            <person name="Marcotte E."/>
            <person name="Greenberg D."/>
            <person name="Roy A."/>
            <person name="Foley K."/>
            <person name="Naylor J."/>
            <person name="Stange-Thomann N."/>
            <person name="Barrett R."/>
            <person name="Gnerre S."/>
            <person name="Kamal M."/>
            <person name="Kamvysselis M."/>
            <person name="Mauceli E.W."/>
            <person name="Bielke C."/>
            <person name="Rudd S."/>
            <person name="Frishman D."/>
            <person name="Krystofova S."/>
            <person name="Rasmussen C."/>
            <person name="Metzenberg R.L."/>
            <person name="Perkins D.D."/>
            <person name="Kroken S."/>
            <person name="Cogoni C."/>
            <person name="Macino G."/>
            <person name="Catcheside D.E.A."/>
            <person name="Li W."/>
            <person name="Pratt R.J."/>
            <person name="Osmani S.A."/>
            <person name="DeSouza C.P.C."/>
            <person name="Glass N.L."/>
            <person name="Orbach M.J."/>
            <person name="Berglund J.A."/>
            <person name="Voelker R."/>
            <person name="Yarden O."/>
            <person name="Plamann M."/>
            <person name="Seiler S."/>
            <person name="Dunlap J.C."/>
            <person name="Radford A."/>
            <person name="Aramayo R."/>
            <person name="Natvig D.O."/>
            <person name="Alex L.A."/>
            <person name="Mannhaupt G."/>
            <person name="Ebbole D.J."/>
            <person name="Freitag M."/>
            <person name="Paulsen I."/>
            <person name="Sachs M.S."/>
            <person name="Lander E.S."/>
            <person name="Nusbaum C."/>
            <person name="Birren B.W."/>
        </authorList>
    </citation>
    <scope>NUCLEOTIDE SEQUENCE [LARGE SCALE GENOMIC DNA]</scope>
    <source>
        <strain>ATCC 24698 / 74-OR23-1A / CBS 708.71 / DSM 1257 / FGSC 987</strain>
    </source>
</reference>
<protein>
    <recommendedName>
        <fullName>Tubulin gamma chain</fullName>
    </recommendedName>
    <alternativeName>
        <fullName>Gamma-tubulin</fullName>
    </alternativeName>
</protein>
<name>TBG_NEUCR</name>
<dbReference type="EMBL" id="X97753">
    <property type="protein sequence ID" value="CAA66348.1"/>
    <property type="molecule type" value="mRNA"/>
</dbReference>
<dbReference type="EMBL" id="BX908812">
    <property type="protein sequence ID" value="CAF06151.1"/>
    <property type="molecule type" value="Genomic_DNA"/>
</dbReference>
<dbReference type="EMBL" id="CM002241">
    <property type="protein sequence ID" value="ESA42244.1"/>
    <property type="molecule type" value="Genomic_DNA"/>
</dbReference>
<dbReference type="EMBL" id="CM002241">
    <property type="protein sequence ID" value="ESA42245.1"/>
    <property type="molecule type" value="Genomic_DNA"/>
</dbReference>
<dbReference type="RefSeq" id="XP_011394889.1">
    <property type="nucleotide sequence ID" value="XM_011396587.1"/>
</dbReference>
<dbReference type="RefSeq" id="XP_011394890.1">
    <property type="nucleotide sequence ID" value="XM_011396588.1"/>
</dbReference>
<dbReference type="SMR" id="P53377"/>
<dbReference type="FunCoup" id="P53377">
    <property type="interactions" value="642"/>
</dbReference>
<dbReference type="STRING" id="367110.P53377"/>
<dbReference type="PaxDb" id="5141-EFNCRP00000003724"/>
<dbReference type="EnsemblFungi" id="ESA42244">
    <property type="protein sequence ID" value="ESA42244"/>
    <property type="gene ID" value="NCU03954"/>
</dbReference>
<dbReference type="EnsemblFungi" id="ESA42245">
    <property type="protein sequence ID" value="ESA42245"/>
    <property type="gene ID" value="NCU03954"/>
</dbReference>
<dbReference type="GeneID" id="3873683"/>
<dbReference type="KEGG" id="ncr:NCU03954"/>
<dbReference type="VEuPathDB" id="FungiDB:NCU03954"/>
<dbReference type="HOGENOM" id="CLU_015718_1_0_1"/>
<dbReference type="InParanoid" id="P53377"/>
<dbReference type="OMA" id="HRYISIL"/>
<dbReference type="OrthoDB" id="10249382at2759"/>
<dbReference type="Proteomes" id="UP000001805">
    <property type="component" value="Chromosome 5, Linkage Group VI"/>
</dbReference>
<dbReference type="GO" id="GO:0005737">
    <property type="term" value="C:cytoplasm"/>
    <property type="evidence" value="ECO:0000318"/>
    <property type="project" value="GO_Central"/>
</dbReference>
<dbReference type="GO" id="GO:0000923">
    <property type="term" value="C:equatorial microtubule organizing center"/>
    <property type="evidence" value="ECO:0007669"/>
    <property type="project" value="EnsemblFungi"/>
</dbReference>
<dbReference type="GO" id="GO:0000931">
    <property type="term" value="C:gamma-tubulin ring complex"/>
    <property type="evidence" value="ECO:0000318"/>
    <property type="project" value="GO_Central"/>
</dbReference>
<dbReference type="GO" id="GO:0008275">
    <property type="term" value="C:gamma-tubulin small complex"/>
    <property type="evidence" value="ECO:0007669"/>
    <property type="project" value="EnsemblFungi"/>
</dbReference>
<dbReference type="GO" id="GO:0061496">
    <property type="term" value="C:half bridge of mitotic spindle pole body"/>
    <property type="evidence" value="ECO:0007669"/>
    <property type="project" value="EnsemblFungi"/>
</dbReference>
<dbReference type="GO" id="GO:0061497">
    <property type="term" value="C:inner plaque of mitotic spindle pole body"/>
    <property type="evidence" value="ECO:0007669"/>
    <property type="project" value="EnsemblFungi"/>
</dbReference>
<dbReference type="GO" id="GO:0031021">
    <property type="term" value="C:interphase microtubule organizing center"/>
    <property type="evidence" value="ECO:0007669"/>
    <property type="project" value="EnsemblFungi"/>
</dbReference>
<dbReference type="GO" id="GO:0043332">
    <property type="term" value="C:mating projection tip"/>
    <property type="evidence" value="ECO:0007669"/>
    <property type="project" value="EnsemblFungi"/>
</dbReference>
<dbReference type="GO" id="GO:0005874">
    <property type="term" value="C:microtubule"/>
    <property type="evidence" value="ECO:0007669"/>
    <property type="project" value="UniProtKB-KW"/>
</dbReference>
<dbReference type="GO" id="GO:0005634">
    <property type="term" value="C:nucleus"/>
    <property type="evidence" value="ECO:0000318"/>
    <property type="project" value="GO_Central"/>
</dbReference>
<dbReference type="GO" id="GO:0071957">
    <property type="term" value="C:old mitotic spindle pole body"/>
    <property type="evidence" value="ECO:0007669"/>
    <property type="project" value="EnsemblFungi"/>
</dbReference>
<dbReference type="GO" id="GO:0061499">
    <property type="term" value="C:outer plaque of mitotic spindle pole body"/>
    <property type="evidence" value="ECO:0007669"/>
    <property type="project" value="EnsemblFungi"/>
</dbReference>
<dbReference type="GO" id="GO:0005819">
    <property type="term" value="C:spindle"/>
    <property type="evidence" value="ECO:0000318"/>
    <property type="project" value="GO_Central"/>
</dbReference>
<dbReference type="GO" id="GO:0005816">
    <property type="term" value="C:spindle pole body"/>
    <property type="evidence" value="ECO:0000318"/>
    <property type="project" value="GO_Central"/>
</dbReference>
<dbReference type="GO" id="GO:0005525">
    <property type="term" value="F:GTP binding"/>
    <property type="evidence" value="ECO:0000318"/>
    <property type="project" value="GO_Central"/>
</dbReference>
<dbReference type="GO" id="GO:0140490">
    <property type="term" value="F:microtubule nucleator activity"/>
    <property type="evidence" value="ECO:0000318"/>
    <property type="project" value="GO_Central"/>
</dbReference>
<dbReference type="GO" id="GO:0031122">
    <property type="term" value="P:cytoplasmic microtubule organization"/>
    <property type="evidence" value="ECO:0007669"/>
    <property type="project" value="InterPro"/>
</dbReference>
<dbReference type="GO" id="GO:0000212">
    <property type="term" value="P:meiotic spindle organization"/>
    <property type="evidence" value="ECO:0000318"/>
    <property type="project" value="GO_Central"/>
</dbReference>
<dbReference type="GO" id="GO:0007020">
    <property type="term" value="P:microtubule nucleation"/>
    <property type="evidence" value="ECO:0000318"/>
    <property type="project" value="GO_Central"/>
</dbReference>
<dbReference type="GO" id="GO:0000278">
    <property type="term" value="P:mitotic cell cycle"/>
    <property type="evidence" value="ECO:0000318"/>
    <property type="project" value="GO_Central"/>
</dbReference>
<dbReference type="GO" id="GO:1902408">
    <property type="term" value="P:mitotic cytokinesis, division site positioning"/>
    <property type="evidence" value="ECO:0007669"/>
    <property type="project" value="EnsemblFungi"/>
</dbReference>
<dbReference type="GO" id="GO:0000070">
    <property type="term" value="P:mitotic sister chromatid segregation"/>
    <property type="evidence" value="ECO:0000318"/>
    <property type="project" value="GO_Central"/>
</dbReference>
<dbReference type="GO" id="GO:0051256">
    <property type="term" value="P:mitotic spindle midzone assembly"/>
    <property type="evidence" value="ECO:0007669"/>
    <property type="project" value="EnsemblFungi"/>
</dbReference>
<dbReference type="GO" id="GO:0007052">
    <property type="term" value="P:mitotic spindle organization"/>
    <property type="evidence" value="ECO:0000318"/>
    <property type="project" value="GO_Central"/>
</dbReference>
<dbReference type="CDD" id="cd02188">
    <property type="entry name" value="gamma_tubulin"/>
    <property type="match status" value="1"/>
</dbReference>
<dbReference type="FunFam" id="1.10.287.600:FF:000004">
    <property type="entry name" value="Tubulin gamma chain"/>
    <property type="match status" value="1"/>
</dbReference>
<dbReference type="FunFam" id="3.30.1330.20:FF:000003">
    <property type="entry name" value="Tubulin gamma chain"/>
    <property type="match status" value="1"/>
</dbReference>
<dbReference type="FunFam" id="3.40.50.1440:FF:000012">
    <property type="entry name" value="Tubulin gamma chain"/>
    <property type="match status" value="1"/>
</dbReference>
<dbReference type="Gene3D" id="1.10.287.600">
    <property type="entry name" value="Helix hairpin bin"/>
    <property type="match status" value="1"/>
</dbReference>
<dbReference type="Gene3D" id="3.30.1330.20">
    <property type="entry name" value="Tubulin/FtsZ, C-terminal domain"/>
    <property type="match status" value="1"/>
</dbReference>
<dbReference type="Gene3D" id="3.40.50.1440">
    <property type="entry name" value="Tubulin/FtsZ, GTPase domain"/>
    <property type="match status" value="1"/>
</dbReference>
<dbReference type="InterPro" id="IPR002454">
    <property type="entry name" value="Gamma_tubulin"/>
</dbReference>
<dbReference type="InterPro" id="IPR008280">
    <property type="entry name" value="Tub_FtsZ_C"/>
</dbReference>
<dbReference type="InterPro" id="IPR000217">
    <property type="entry name" value="Tubulin"/>
</dbReference>
<dbReference type="InterPro" id="IPR037103">
    <property type="entry name" value="Tubulin/FtsZ-like_C"/>
</dbReference>
<dbReference type="InterPro" id="IPR018316">
    <property type="entry name" value="Tubulin/FtsZ_2-layer-sand-dom"/>
</dbReference>
<dbReference type="InterPro" id="IPR036525">
    <property type="entry name" value="Tubulin/FtsZ_GTPase_sf"/>
</dbReference>
<dbReference type="InterPro" id="IPR023123">
    <property type="entry name" value="Tubulin_C"/>
</dbReference>
<dbReference type="InterPro" id="IPR017975">
    <property type="entry name" value="Tubulin_CS"/>
</dbReference>
<dbReference type="InterPro" id="IPR003008">
    <property type="entry name" value="Tubulin_FtsZ_GTPase"/>
</dbReference>
<dbReference type="PANTHER" id="PTHR11588">
    <property type="entry name" value="TUBULIN"/>
    <property type="match status" value="1"/>
</dbReference>
<dbReference type="Pfam" id="PF00091">
    <property type="entry name" value="Tubulin"/>
    <property type="match status" value="1"/>
</dbReference>
<dbReference type="Pfam" id="PF03953">
    <property type="entry name" value="Tubulin_C"/>
    <property type="match status" value="1"/>
</dbReference>
<dbReference type="PRINTS" id="PR01164">
    <property type="entry name" value="GAMMATUBULIN"/>
</dbReference>
<dbReference type="PRINTS" id="PR01161">
    <property type="entry name" value="TUBULIN"/>
</dbReference>
<dbReference type="SMART" id="SM00864">
    <property type="entry name" value="Tubulin"/>
    <property type="match status" value="1"/>
</dbReference>
<dbReference type="SMART" id="SM00865">
    <property type="entry name" value="Tubulin_C"/>
    <property type="match status" value="1"/>
</dbReference>
<dbReference type="SUPFAM" id="SSF55307">
    <property type="entry name" value="Tubulin C-terminal domain-like"/>
    <property type="match status" value="1"/>
</dbReference>
<dbReference type="SUPFAM" id="SSF52490">
    <property type="entry name" value="Tubulin nucleotide-binding domain-like"/>
    <property type="match status" value="1"/>
</dbReference>
<dbReference type="PROSITE" id="PS00227">
    <property type="entry name" value="TUBULIN"/>
    <property type="match status" value="1"/>
</dbReference>
<sequence length="461" mass="51598">MPREIITIQAGQCGNSIGSQFWQQLCLEHGISQDGTIEDFATEGGDRKDVFFYQSDDTRYIPRSILIDLEPRVINTIQTGPYRNIYNPENFYVGKSGLGAGNNWGDGYQTGEQVHEEIMEMIEREADGSDSLEGFMMLHSIAGGTGSGLGSFLLERLNDRFPKKIIQTYSVFPDTTSAGDVVVHPYNSLLAMRRLTQNADSVVVLDNGALSHIAADRLHVQEPSFQQTNQLVSTVMSASTTTLRYPGYMHNDLVSILASLIPTPRCHFLMTSYTPFTGDQVEQAKTVRKTTVLDVMRRLLQPKNRMVSTVPGKKSCYISILNVIQGDVDPTDVHKSLLRIRERRLATFIPWGPASIQVALTKRSPYVTMAHRVSGLMLANHTSIATLFKRIVRQYDGMRKRNAFMEAYKKTAPFSENLNEFDEAREVVMDLIADYEAAEDANYLNPELGENASADTDKRMA</sequence>